<protein>
    <recommendedName>
        <fullName evidence="7">Highly reducing polyketide synthase sphB</fullName>
        <shortName evidence="7">HR-PKS sphB</shortName>
        <ecNumber evidence="6">2.3.1.-</ecNumber>
    </recommendedName>
    <alternativeName>
        <fullName evidence="7">Sphingofungin biosynthesis cluster protein B</fullName>
    </alternativeName>
</protein>
<comment type="function">
    <text evidence="6">Highly reducing polyketide synthase; part of the gene cluster that mediates the biosynthesis of sphingofungins, bioactive molecules acting as sphingolipid inhibitors via inhibiting serine palmitoyl transferase (SPT) (PubMed:35023724). Within the pathway, sphB catalyzes the first step of sphingofungin biosynthesis by condensing 8 units of malonyl-CoA with one starter unit of acetyl-CoA, leading to an C18 polyketide precursor 3-hydroxyoctadeca-4,10-dienoyl-ACP containing one delta-6 desaturation and one delta-12 desaturation. The PKS sphB does not contain any putative thioesterase domain for releasing the nascent polyketide chain and it has been suggested that aminoacyl transferases can facilitate the polyketide chain release (PubMed:35023724). The aminoacyl transferase sphA uses the sphB product to produce 3-keto-presphingofungin by adding an aminomalonate molecule. SphF then reduces the C-3 ketone of 3-keto-presphingofungin which leads to presphingofungin. The cytochrome P450 monooxygenase sphH converts presphingofungin into sphingofungin B1 which is further converted to sphingofungin B by the dioxygenase sphC. SphC is also able to convert presphingofungin into sphingofungin B2. The acetyltransferase sphE acetylates sphingofungin B to produce sphingofungin C, but can also convert sphingofungin B1 into sphingofungin C1 and sphingofungin B2 into sphingofungin C2. Finally, sphingofungin C can be spontaneously converted into sphingofungin D (PubMed:35023724).</text>
</comment>
<comment type="catalytic activity">
    <reaction evidence="6">
        <text>holo-[ACP] + 8 malonyl-CoA + acetyl-CoA + 5 AH2 + 8 NADPH + 16 H(+) = (3R)-hydroxyoctadeca-4,10-dienoyl-[ACP] + 5 A + 8 CO2 + 8 NADP(+) + 9 CoA + 7 H2O</text>
        <dbReference type="Rhea" id="RHEA:81147"/>
        <dbReference type="Rhea" id="RHEA-COMP:9685"/>
        <dbReference type="Rhea" id="RHEA-COMP:19635"/>
        <dbReference type="ChEBI" id="CHEBI:13193"/>
        <dbReference type="ChEBI" id="CHEBI:15377"/>
        <dbReference type="ChEBI" id="CHEBI:15378"/>
        <dbReference type="ChEBI" id="CHEBI:16526"/>
        <dbReference type="ChEBI" id="CHEBI:17499"/>
        <dbReference type="ChEBI" id="CHEBI:57287"/>
        <dbReference type="ChEBI" id="CHEBI:57288"/>
        <dbReference type="ChEBI" id="CHEBI:57384"/>
        <dbReference type="ChEBI" id="CHEBI:57783"/>
        <dbReference type="ChEBI" id="CHEBI:58349"/>
        <dbReference type="ChEBI" id="CHEBI:64479"/>
        <dbReference type="ChEBI" id="CHEBI:231803"/>
    </reaction>
    <physiologicalReaction direction="left-to-right" evidence="6">
        <dbReference type="Rhea" id="RHEA:81148"/>
    </physiologicalReaction>
</comment>
<comment type="cofactor">
    <cofactor evidence="2">
        <name>pantetheine 4'-phosphate</name>
        <dbReference type="ChEBI" id="CHEBI:47942"/>
    </cofactor>
</comment>
<comment type="pathway">
    <text evidence="6">Secondary metabolite biosynthesis.</text>
</comment>
<comment type="induction">
    <text evidence="6">Expression is positively regulated by the sphingofungins biosynthesis cluster-specific transcription factor sphG.</text>
</comment>
<comment type="domain">
    <text evidence="8">Multidomain protein; including a ketosynthase (KS) that catalyzes repeated decarboxylative condensation to elongate the polyketide backbone; a malonyl-CoA:ACP transacylase (MAT) that selects and transfers the extender unit malonyl-CoA; a dehydratase (DH) domain that reduces hydroxyl groups to enoyl groups; a methyltransferase (CMeT) domain responsible for the incorporation of methyl groups; an enoylreductase (ER) domain that reduces enoyl groups to alkyl group; a ketoreductase (KR) domain that catalyzes beta-ketoreduction steps; and an acyl-carrier protein (ACP) that serves as the tether of the growing and completed polyketide via its phosphopantetheinyl arm.</text>
</comment>
<comment type="disruption phenotype">
    <text evidence="6">Completely abolishes the production of sphingofungins.</text>
</comment>
<comment type="biotechnology">
    <text evidence="5">The sphingofungins A, B, C, and D, show a limited antifungal spectrum of activity but are especially effective against Cryptococcus species, fungal pathogens causing opportunistic infections in human.</text>
</comment>
<organism>
    <name type="scientific">Aspergillus fumigatus (strain CBS 144.89 / FGSC A1163 / CEA10)</name>
    <name type="common">Neosartorya fumigata</name>
    <dbReference type="NCBI Taxonomy" id="451804"/>
    <lineage>
        <taxon>Eukaryota</taxon>
        <taxon>Fungi</taxon>
        <taxon>Dikarya</taxon>
        <taxon>Ascomycota</taxon>
        <taxon>Pezizomycotina</taxon>
        <taxon>Eurotiomycetes</taxon>
        <taxon>Eurotiomycetidae</taxon>
        <taxon>Eurotiales</taxon>
        <taxon>Aspergillaceae</taxon>
        <taxon>Aspergillus</taxon>
        <taxon>Aspergillus subgen. Fumigati</taxon>
    </lineage>
</organism>
<accession>B0XZV6</accession>
<feature type="chain" id="PRO_0000461278" description="Highly reducing polyketide synthase sphB">
    <location>
        <begin position="1"/>
        <end position="2514"/>
    </location>
</feature>
<feature type="domain" description="Ketosynthase family 3 (KS3)" evidence="3">
    <location>
        <begin position="66"/>
        <end position="486"/>
    </location>
</feature>
<feature type="domain" description="Malonyl-CoA:ACP transacylase (MAT)" evidence="1">
    <location>
        <begin position="580"/>
        <end position="904"/>
    </location>
</feature>
<feature type="domain" description="PKS/mFAS DH" evidence="4">
    <location>
        <begin position="950"/>
        <end position="1240"/>
    </location>
</feature>
<feature type="domain" description="Enoyl reductase (ER)" evidence="1">
    <location>
        <begin position="1779"/>
        <end position="2092"/>
    </location>
</feature>
<feature type="domain" description="Ketoreductase (KR)" evidence="1">
    <location>
        <begin position="2120"/>
        <end position="2297"/>
    </location>
</feature>
<feature type="domain" description="Carrier" evidence="2">
    <location>
        <begin position="2427"/>
        <end position="2504"/>
    </location>
</feature>
<feature type="region of interest" description="N-terminal hotdog fold" evidence="4">
    <location>
        <begin position="950"/>
        <end position="1079"/>
    </location>
</feature>
<feature type="region of interest" description="C-terminal hotdog fold" evidence="4">
    <location>
        <begin position="1089"/>
        <end position="1240"/>
    </location>
</feature>
<feature type="region of interest" description="Methyltransferase (CMet) domain" evidence="1">
    <location>
        <begin position="1319"/>
        <end position="1578"/>
    </location>
</feature>
<feature type="active site" description="For beta-ketoacyl synthase activity" evidence="3">
    <location>
        <position position="238"/>
    </location>
</feature>
<feature type="active site" description="For beta-ketoacyl synthase activity" evidence="3">
    <location>
        <position position="374"/>
    </location>
</feature>
<feature type="active site" description="For beta-ketoacyl synthase activity" evidence="3">
    <location>
        <position position="409"/>
    </location>
</feature>
<feature type="active site" description="Proton acceptor; for dehydratase activity" evidence="4">
    <location>
        <position position="982"/>
    </location>
</feature>
<feature type="active site" description="Proton donor; for dehydratase activity" evidence="4">
    <location>
        <position position="1150"/>
    </location>
</feature>
<feature type="modified residue" description="O-(pantetheine 4'-phosphoryl)serine" evidence="2">
    <location>
        <position position="2464"/>
    </location>
</feature>
<reference key="1">
    <citation type="journal article" date="2008" name="PLoS Genet.">
        <title>Genomic islands in the pathogenic filamentous fungus Aspergillus fumigatus.</title>
        <authorList>
            <person name="Fedorova N.D."/>
            <person name="Khaldi N."/>
            <person name="Joardar V.S."/>
            <person name="Maiti R."/>
            <person name="Amedeo P."/>
            <person name="Anderson M.J."/>
            <person name="Crabtree J."/>
            <person name="Silva J.C."/>
            <person name="Badger J.H."/>
            <person name="Albarraq A."/>
            <person name="Angiuoli S."/>
            <person name="Bussey H."/>
            <person name="Bowyer P."/>
            <person name="Cotty P.J."/>
            <person name="Dyer P.S."/>
            <person name="Egan A."/>
            <person name="Galens K."/>
            <person name="Fraser-Liggett C.M."/>
            <person name="Haas B.J."/>
            <person name="Inman J.M."/>
            <person name="Kent R."/>
            <person name="Lemieux S."/>
            <person name="Malavazi I."/>
            <person name="Orvis J."/>
            <person name="Roemer T."/>
            <person name="Ronning C.M."/>
            <person name="Sundaram J.P."/>
            <person name="Sutton G."/>
            <person name="Turner G."/>
            <person name="Venter J.C."/>
            <person name="White O.R."/>
            <person name="Whitty B.R."/>
            <person name="Youngman P."/>
            <person name="Wolfe K.H."/>
            <person name="Goldman G.H."/>
            <person name="Wortman J.R."/>
            <person name="Jiang B."/>
            <person name="Denning D.W."/>
            <person name="Nierman W.C."/>
        </authorList>
    </citation>
    <scope>NUCLEOTIDE SEQUENCE [LARGE SCALE GENOMIC DNA]</scope>
    <source>
        <strain>CBS 144.89 / FGSC A1163 / CEA10</strain>
    </source>
</reference>
<reference key="2">
    <citation type="journal article" date="1992" name="J. Antibiot.">
        <title>Sphingofungins A, B, C, and D; a new family of antifungal agents. I. Fermentation, isolation, and biological activity.</title>
        <authorList>
            <person name="VanMiddlesworth F."/>
            <person name="Giacobbe R.A."/>
            <person name="Lopez M."/>
            <person name="Garrity G."/>
            <person name="Bland J.A."/>
            <person name="Bartizal K."/>
            <person name="Fromtling R.A."/>
            <person name="Polishook J."/>
            <person name="Zweerink M."/>
            <person name="Edison A.M."/>
        </authorList>
    </citation>
    <scope>BIOTECHNOLOGY</scope>
</reference>
<reference key="3">
    <citation type="journal article" date="2022" name="ACS Chem. Biol.">
        <title>Biosynthesis of the sphingolipid inhibitors sphingofungins in filamentous fungi requires aminomalonate as a metabolic precursor.</title>
        <authorList>
            <person name="Bissell A.U."/>
            <person name="Rautschek J."/>
            <person name="Hoefgen S."/>
            <person name="Raguz L."/>
            <person name="Mattern D.J."/>
            <person name="Saeed N."/>
            <person name="Janevska S."/>
            <person name="Jojic K."/>
            <person name="Huang Y."/>
            <person name="Kufs J.E."/>
            <person name="Herboeck B."/>
            <person name="Guo H."/>
            <person name="Hillmann F."/>
            <person name="Beemelmanns C."/>
            <person name="Valiante V."/>
        </authorList>
    </citation>
    <scope>FUNCTION</scope>
    <scope>DISRUPTION PHENOTYPE</scope>
    <scope>INDUCTION</scope>
    <scope>CATALYTIC ACTIVITY</scope>
    <scope>PATHWAY</scope>
</reference>
<name>SPHB_ASPFC</name>
<gene>
    <name evidence="7" type="primary">sphB</name>
    <name type="ORF">AFUB_034520</name>
</gene>
<dbReference type="EC" id="2.3.1.-" evidence="6"/>
<dbReference type="EMBL" id="DS499596">
    <property type="protein sequence ID" value="EDP52288.1"/>
    <property type="molecule type" value="Genomic_DNA"/>
</dbReference>
<dbReference type="SMR" id="B0XZV6"/>
<dbReference type="EnsemblFungi" id="EDP52288">
    <property type="protein sequence ID" value="EDP52288"/>
    <property type="gene ID" value="AFUB_034520"/>
</dbReference>
<dbReference type="VEuPathDB" id="FungiDB:AFUB_034520"/>
<dbReference type="HOGENOM" id="CLU_000022_31_0_1"/>
<dbReference type="OrthoDB" id="92865at5052"/>
<dbReference type="PhylomeDB" id="B0XZV6"/>
<dbReference type="Proteomes" id="UP000001699">
    <property type="component" value="Unassembled WGS sequence"/>
</dbReference>
<dbReference type="GO" id="GO:0004312">
    <property type="term" value="F:fatty acid synthase activity"/>
    <property type="evidence" value="ECO:0007669"/>
    <property type="project" value="TreeGrafter"/>
</dbReference>
<dbReference type="GO" id="GO:0008168">
    <property type="term" value="F:methyltransferase activity"/>
    <property type="evidence" value="ECO:0007669"/>
    <property type="project" value="UniProtKB-KW"/>
</dbReference>
<dbReference type="GO" id="GO:0016491">
    <property type="term" value="F:oxidoreductase activity"/>
    <property type="evidence" value="ECO:0007669"/>
    <property type="project" value="UniProtKB-KW"/>
</dbReference>
<dbReference type="GO" id="GO:0031177">
    <property type="term" value="F:phosphopantetheine binding"/>
    <property type="evidence" value="ECO:0007669"/>
    <property type="project" value="InterPro"/>
</dbReference>
<dbReference type="GO" id="GO:0006633">
    <property type="term" value="P:fatty acid biosynthetic process"/>
    <property type="evidence" value="ECO:0007669"/>
    <property type="project" value="TreeGrafter"/>
</dbReference>
<dbReference type="GO" id="GO:0032259">
    <property type="term" value="P:methylation"/>
    <property type="evidence" value="ECO:0007669"/>
    <property type="project" value="UniProtKB-KW"/>
</dbReference>
<dbReference type="GO" id="GO:0044550">
    <property type="term" value="P:secondary metabolite biosynthetic process"/>
    <property type="evidence" value="ECO:0007669"/>
    <property type="project" value="TreeGrafter"/>
</dbReference>
<dbReference type="CDD" id="cd05195">
    <property type="entry name" value="enoyl_red"/>
    <property type="match status" value="1"/>
</dbReference>
<dbReference type="CDD" id="cd00833">
    <property type="entry name" value="PKS"/>
    <property type="match status" value="1"/>
</dbReference>
<dbReference type="FunFam" id="3.40.50.720:FF:000209">
    <property type="entry name" value="Polyketide synthase Pks12"/>
    <property type="match status" value="1"/>
</dbReference>
<dbReference type="Gene3D" id="3.40.47.10">
    <property type="match status" value="1"/>
</dbReference>
<dbReference type="Gene3D" id="1.10.1200.10">
    <property type="entry name" value="ACP-like"/>
    <property type="match status" value="1"/>
</dbReference>
<dbReference type="Gene3D" id="3.30.70.250">
    <property type="entry name" value="Malonyl-CoA ACP transacylase, ACP-binding"/>
    <property type="match status" value="1"/>
</dbReference>
<dbReference type="Gene3D" id="3.40.366.10">
    <property type="entry name" value="Malonyl-Coenzyme A Acyl Carrier Protein, domain 2"/>
    <property type="match status" value="1"/>
</dbReference>
<dbReference type="Gene3D" id="3.90.180.10">
    <property type="entry name" value="Medium-chain alcohol dehydrogenases, catalytic domain"/>
    <property type="match status" value="1"/>
</dbReference>
<dbReference type="Gene3D" id="3.40.50.720">
    <property type="entry name" value="NAD(P)-binding Rossmann-like Domain"/>
    <property type="match status" value="1"/>
</dbReference>
<dbReference type="Gene3D" id="3.10.129.110">
    <property type="entry name" value="Polyketide synthase dehydratase"/>
    <property type="match status" value="1"/>
</dbReference>
<dbReference type="Gene3D" id="3.40.50.150">
    <property type="entry name" value="Vaccinia Virus protein VP39"/>
    <property type="match status" value="1"/>
</dbReference>
<dbReference type="InterPro" id="IPR001227">
    <property type="entry name" value="Ac_transferase_dom_sf"/>
</dbReference>
<dbReference type="InterPro" id="IPR036736">
    <property type="entry name" value="ACP-like_sf"/>
</dbReference>
<dbReference type="InterPro" id="IPR014043">
    <property type="entry name" value="Acyl_transferase_dom"/>
</dbReference>
<dbReference type="InterPro" id="IPR016035">
    <property type="entry name" value="Acyl_Trfase/lysoPLipase"/>
</dbReference>
<dbReference type="InterPro" id="IPR013154">
    <property type="entry name" value="ADH-like_N"/>
</dbReference>
<dbReference type="InterPro" id="IPR011032">
    <property type="entry name" value="GroES-like_sf"/>
</dbReference>
<dbReference type="InterPro" id="IPR014031">
    <property type="entry name" value="Ketoacyl_synth_C"/>
</dbReference>
<dbReference type="InterPro" id="IPR014030">
    <property type="entry name" value="Ketoacyl_synth_N"/>
</dbReference>
<dbReference type="InterPro" id="IPR016036">
    <property type="entry name" value="Malonyl_transacylase_ACP-bd"/>
</dbReference>
<dbReference type="InterPro" id="IPR025714">
    <property type="entry name" value="Methyltranfer_dom"/>
</dbReference>
<dbReference type="InterPro" id="IPR036291">
    <property type="entry name" value="NAD(P)-bd_dom_sf"/>
</dbReference>
<dbReference type="InterPro" id="IPR032821">
    <property type="entry name" value="PKS_assoc"/>
</dbReference>
<dbReference type="InterPro" id="IPR020841">
    <property type="entry name" value="PKS_Beta-ketoAc_synthase_dom"/>
</dbReference>
<dbReference type="InterPro" id="IPR042104">
    <property type="entry name" value="PKS_dehydratase_sf"/>
</dbReference>
<dbReference type="InterPro" id="IPR020807">
    <property type="entry name" value="PKS_DH"/>
</dbReference>
<dbReference type="InterPro" id="IPR049551">
    <property type="entry name" value="PKS_DH_C"/>
</dbReference>
<dbReference type="InterPro" id="IPR049552">
    <property type="entry name" value="PKS_DH_N"/>
</dbReference>
<dbReference type="InterPro" id="IPR020843">
    <property type="entry name" value="PKS_ER"/>
</dbReference>
<dbReference type="InterPro" id="IPR013968">
    <property type="entry name" value="PKS_KR"/>
</dbReference>
<dbReference type="InterPro" id="IPR049900">
    <property type="entry name" value="PKS_mFAS_DH"/>
</dbReference>
<dbReference type="InterPro" id="IPR050091">
    <property type="entry name" value="PKS_NRPS_Biosynth_Enz"/>
</dbReference>
<dbReference type="InterPro" id="IPR020806">
    <property type="entry name" value="PKS_PP-bd"/>
</dbReference>
<dbReference type="InterPro" id="IPR009081">
    <property type="entry name" value="PP-bd_ACP"/>
</dbReference>
<dbReference type="InterPro" id="IPR006162">
    <property type="entry name" value="Ppantetheine_attach_site"/>
</dbReference>
<dbReference type="InterPro" id="IPR029063">
    <property type="entry name" value="SAM-dependent_MTases_sf"/>
</dbReference>
<dbReference type="InterPro" id="IPR016039">
    <property type="entry name" value="Thiolase-like"/>
</dbReference>
<dbReference type="PANTHER" id="PTHR43775">
    <property type="entry name" value="FATTY ACID SYNTHASE"/>
    <property type="match status" value="1"/>
</dbReference>
<dbReference type="PANTHER" id="PTHR43775:SF28">
    <property type="entry name" value="SYNTHASE, PUTATIVE-RELATED"/>
    <property type="match status" value="1"/>
</dbReference>
<dbReference type="Pfam" id="PF00698">
    <property type="entry name" value="Acyl_transf_1"/>
    <property type="match status" value="1"/>
</dbReference>
<dbReference type="Pfam" id="PF08240">
    <property type="entry name" value="ADH_N"/>
    <property type="match status" value="1"/>
</dbReference>
<dbReference type="Pfam" id="PF13602">
    <property type="entry name" value="ADH_zinc_N_2"/>
    <property type="match status" value="1"/>
</dbReference>
<dbReference type="Pfam" id="PF16197">
    <property type="entry name" value="KAsynt_C_assoc"/>
    <property type="match status" value="1"/>
</dbReference>
<dbReference type="Pfam" id="PF00109">
    <property type="entry name" value="ketoacyl-synt"/>
    <property type="match status" value="1"/>
</dbReference>
<dbReference type="Pfam" id="PF02801">
    <property type="entry name" value="Ketoacyl-synt_C"/>
    <property type="match status" value="1"/>
</dbReference>
<dbReference type="Pfam" id="PF08659">
    <property type="entry name" value="KR"/>
    <property type="match status" value="1"/>
</dbReference>
<dbReference type="Pfam" id="PF13847">
    <property type="entry name" value="Methyltransf_31"/>
    <property type="match status" value="1"/>
</dbReference>
<dbReference type="Pfam" id="PF21089">
    <property type="entry name" value="PKS_DH_N"/>
    <property type="match status" value="1"/>
</dbReference>
<dbReference type="Pfam" id="PF00550">
    <property type="entry name" value="PP-binding"/>
    <property type="match status" value="1"/>
</dbReference>
<dbReference type="Pfam" id="PF14765">
    <property type="entry name" value="PS-DH"/>
    <property type="match status" value="1"/>
</dbReference>
<dbReference type="SMART" id="SM00827">
    <property type="entry name" value="PKS_AT"/>
    <property type="match status" value="1"/>
</dbReference>
<dbReference type="SMART" id="SM00826">
    <property type="entry name" value="PKS_DH"/>
    <property type="match status" value="1"/>
</dbReference>
<dbReference type="SMART" id="SM00829">
    <property type="entry name" value="PKS_ER"/>
    <property type="match status" value="1"/>
</dbReference>
<dbReference type="SMART" id="SM00822">
    <property type="entry name" value="PKS_KR"/>
    <property type="match status" value="1"/>
</dbReference>
<dbReference type="SMART" id="SM00825">
    <property type="entry name" value="PKS_KS"/>
    <property type="match status" value="1"/>
</dbReference>
<dbReference type="SMART" id="SM00823">
    <property type="entry name" value="PKS_PP"/>
    <property type="match status" value="1"/>
</dbReference>
<dbReference type="SUPFAM" id="SSF47336">
    <property type="entry name" value="ACP-like"/>
    <property type="match status" value="1"/>
</dbReference>
<dbReference type="SUPFAM" id="SSF52151">
    <property type="entry name" value="FabD/lysophospholipase-like"/>
    <property type="match status" value="1"/>
</dbReference>
<dbReference type="SUPFAM" id="SSF50129">
    <property type="entry name" value="GroES-like"/>
    <property type="match status" value="1"/>
</dbReference>
<dbReference type="SUPFAM" id="SSF51735">
    <property type="entry name" value="NAD(P)-binding Rossmann-fold domains"/>
    <property type="match status" value="2"/>
</dbReference>
<dbReference type="SUPFAM" id="SSF55048">
    <property type="entry name" value="Probable ACP-binding domain of malonyl-CoA ACP transacylase"/>
    <property type="match status" value="1"/>
</dbReference>
<dbReference type="SUPFAM" id="SSF53335">
    <property type="entry name" value="S-adenosyl-L-methionine-dependent methyltransferases"/>
    <property type="match status" value="1"/>
</dbReference>
<dbReference type="SUPFAM" id="SSF53901">
    <property type="entry name" value="Thiolase-like"/>
    <property type="match status" value="1"/>
</dbReference>
<dbReference type="PROSITE" id="PS50075">
    <property type="entry name" value="CARRIER"/>
    <property type="match status" value="1"/>
</dbReference>
<dbReference type="PROSITE" id="PS52004">
    <property type="entry name" value="KS3_2"/>
    <property type="match status" value="1"/>
</dbReference>
<dbReference type="PROSITE" id="PS00012">
    <property type="entry name" value="PHOSPHOPANTETHEINE"/>
    <property type="match status" value="1"/>
</dbReference>
<dbReference type="PROSITE" id="PS52019">
    <property type="entry name" value="PKS_MFAS_DH"/>
    <property type="match status" value="1"/>
</dbReference>
<proteinExistence type="evidence at protein level"/>
<evidence type="ECO:0000255" key="1"/>
<evidence type="ECO:0000255" key="2">
    <source>
        <dbReference type="PROSITE-ProRule" id="PRU00258"/>
    </source>
</evidence>
<evidence type="ECO:0000255" key="3">
    <source>
        <dbReference type="PROSITE-ProRule" id="PRU01348"/>
    </source>
</evidence>
<evidence type="ECO:0000255" key="4">
    <source>
        <dbReference type="PROSITE-ProRule" id="PRU01363"/>
    </source>
</evidence>
<evidence type="ECO:0000269" key="5">
    <source>
    </source>
</evidence>
<evidence type="ECO:0000269" key="6">
    <source>
    </source>
</evidence>
<evidence type="ECO:0000303" key="7">
    <source>
    </source>
</evidence>
<evidence type="ECO:0000305" key="8">
    <source>
    </source>
</evidence>
<keyword id="KW-0012">Acyltransferase</keyword>
<keyword id="KW-0489">Methyltransferase</keyword>
<keyword id="KW-0511">Multifunctional enzyme</keyword>
<keyword id="KW-0521">NADP</keyword>
<keyword id="KW-0560">Oxidoreductase</keyword>
<keyword id="KW-0596">Phosphopantetheine</keyword>
<keyword id="KW-0597">Phosphoprotein</keyword>
<keyword id="KW-0808">Transferase</keyword>
<sequence>MIRQVTDCEASTFYVEFTSMTMDESTGTNGHGVTMGSDTTNGATPNGVYANGTNGTLAHGVLRGAQVPIAICGMACRLPGGLTTPDELWDFLLAKKDARCRVPHSRYDIDSYYSDTKKPGTVSTEYGYFLDESVDVGALDTSFFSMTRTEVERADPQQRLMLEVAREAFEDAGVTHWRGKTIGTYIGNFGEDWLEMFGKETQPWGIHRISGSGDFVVANRLSYEFDLQGPSMTIRTACSSALVALNEACAAISRGDCGSALVGGVNLILAPGMSMAMQEQGVLSSDGSCKTFSADANGYARGEAVTAIFIKPLADALRDGNPIRAVVRATSHNADGKTPTLSQPSTDAQEALMRRAYELGGITDYAETAMVECHGTGTPTGDPIEAAAVARVFGDKGVYIGSVKPNLGHTEAASGLVSLLKMVKALEHRVIPPNIKFTSPNPNIPFAEGKLTVPTDPLPWPKDRLERVSVNSFGIGGANAHVILESAATYNVPVAVHETPETPQLLLFTANSSKSITRMIDGYKAWVEQNPDKVSDLAYTLARRREHLPHRAFAIFRNGVLESVSQPANSKAAKPPSVVMVFTGQGAQWPQMGRDLLRSNDVFRSSIRLLDQHLQTIAGEKPQYSIEEELKKPAKKSRLSLAEFSQPLCTAVQIALVDTLASAGIHPDAVVGHSSGEIAAAYAAGALSAGEAITAAHHRGAVTSRQKRVGTMAAIGMSWAETEKYLVPNVTIACDNSPRSITISGDVDAVKSVVAAIKEAQPQMLARLLQVDKAYHSYHMKEIGEDYQSLINEEVVGREPSALFFSSVTGQVLGPDHSTWSKYWQENLESPVRFREAVTAILKHDVGKNAVFLEVGPHGALAGPLRQIFTQATSSAPYVSVMARNQDCNASFLAAIGALHSLNVDVNLEALFPTGCCLPDLPRYPWNHEGSYWYESRLSKEWRNRRFPYHDLLGARVAESSDGEPAWRNMFHVTNTPWMRDHEVGEHIVFPFCGYIALAGEAIRQLTNVEEGFSVRNIIVSTALVLSEGKPTEMMATFRPHRLTNFLNSAWWEFTVSAYNGRNWTKHCTGEVCAQSSAPEQTQDPAGLPRTLNVRKWYEKMGKGGLNLGGSFQTLETMTTSTSEQRAVGKVVNGRQGDEANYHIHPTVLDATLQILGAAAVKGYARKTKTWLPTSIDKFTVHRCASDMVTSVSAQLSSNFSVVGDGRCTSGGTTVVDAVGIRMSLADGAGAADISDTHAASRCEWRPDIDFLDVHELFRSPANRTDHLRLLEELGDICLLLSQWHFSEASNPIPPHLQQYMAWVGSQSGAIAFRLPSTWTGLDHEAISDRIDSILSQLADTPAAPVANAIHQVCVNMESLLSGESLDSILPGETLTHVHEFLGQVDRREFIQLLSHSKPNLRILEIGTGNGVSLHRDILAELTRPDGEILCAKYTLTAPGYVVATTQEKIFPNMQFASLDISQDPFEQGFEDVGYDLIIAVNALRECKNTEESLANLRKLLSSDGRLLLQELCPSSRWIRYVLGVLPTWWAGPADEPIETPYLSQEEWQTTIAAAGFGDIEAVALDSEEPHQVTTTMVVRQAREAPMKKVTVLVEEEGPAVTHIVSELEKEGYEVTRCRLEDDPPAGQDVMSLLDIEQPFFHGIDEARFLLFKSFLLGLQDRNAGMLWTTHLIDIGCRDPRYGQVLGLARTIRTEQLADLGTCQIDSFDSSASIRGLLRLFAKFQTRQGDEELNPDFEWAIVNGQVQVARFHPFILADELLVSEDSKNEMATLNVRTPGRVNSLHYARHERKDLEKDEVEVEVYCAGLNFRDILVALGIVELPVRLFGIEAAGTVTRVGADVSPDDLQVGDRVVCFCRKDAFSTYTTTLAAVCVRIPDSLTFDQAGTMLIPYFTAIHSMVNVGRVTKGQSVLIHSACGGVGLAAIQVAQMLEADVYVTVGSEEKVKYLMENYHIPRHKIFHSRDRSFVDGVMRETNGRGMDFILNSLSGELLHATWSCVAEFGTLLEIGKRDLIGDGKLDMRPFLANRNYCCVDIDGLWKRIHVARALIFSILDFYDKGYITPLPMTIFPATQTQDAFRFMEKGQHIGRVGVSFKPADGGPQLGLETTKRALTIAFNGSASYLMVGGLGGIGRAVSTWMVDHGARELVYLSRSAGRTPKDDDFVTELQSMGCAVRLVSGDTTKLADVQRAIAAATYPLKGIVQMSMVVANENFTRMSFAEWTASTAPKVQGTWNLHDASVAAGINLDFFVMFSSVSGIVGQAGQANYASGNSFLDAFAQYRNGLGLPASVVDMGAVEDVGWISEHQGMMGKMSRSGFKPVLEQEVIDAMAISMLVHNQARQAIADEALAADSKATSYFVHKNTFLVGLALLIPLHDPSNYVIWKKDRRMASYHNNSTVAAATAASTDVLKTYLSSAKADPSILKSPEAAKLFAVEIGKRLFDLLLKPHEEPNTSWPLLDLGLDSLVALELRAWIKQVFSFDLPMLEMMSIGSLDILGQYAANEVYRITTDNNEG</sequence>